<organismHost>
    <name type="scientific">Rottboellia</name>
    <dbReference type="NCBI Taxonomy" id="300124"/>
</organismHost>
<organismHost>
    <name type="scientific">Setaria</name>
    <dbReference type="NCBI Taxonomy" id="4554"/>
</organismHost>
<organismHost>
    <name type="scientific">Sorghum bicolor</name>
    <name type="common">Sorghum</name>
    <name type="synonym">Sorghum vulgare</name>
    <dbReference type="NCBI Taxonomy" id="4558"/>
</organismHost>
<organismHost>
    <name type="scientific">Zea mays</name>
    <name type="common">Maize</name>
    <dbReference type="NCBI Taxonomy" id="4577"/>
</organismHost>
<sequence>MANINIPDDLVSKYSEDVKDLTQKAGSIPSSKSLIPQTAFTPDELRRSLKFWQVTTKVAATVASDWTNLATALTNGTFSATHLRTLCELAFNLKAPTGTGTIFIHEIADPWKGCIDANAPDTVAIPATDSDVNMSTVSSGSTASGTEDAEVKMKAISFLCCTLLRLSVKEPSHIMQAINSIRQRFGSLYGVSSPTLNSVTFNRSQLSRIKQGIETYPSARGTVFYYTRYADATHGYTTKEYGICRFLLFQHLELEGMHIYKMLLALLGEWSTVPIGLLLTWIRNPRSKLAINEIVKIVKELDKPEVDKGWKYARMVNNTFFLDLSSRRNTYLCAVLASLNKKNVPQGSGEYADPTNIAVIKNMDQSVKSQVATDVTLIERIYEKYLVSAGGDEAGTAYALSRGVKRSSPPSQEGGQSGQSGGTPMEVDGASGRGAAGPAPKKTRSGL</sequence>
<protein>
    <recommendedName>
        <fullName>Nucleoprotein</fullName>
        <shortName>NP</shortName>
    </recommendedName>
    <alternativeName>
        <fullName>Nucleocapsid protein</fullName>
        <shortName>Protein N</shortName>
    </alternativeName>
</protein>
<reference key="1">
    <citation type="journal article" date="2005" name="J. Virol. Methods">
        <title>Shotgun sequencing of the negative-sense RNA genome of the rhabdovirus Maize mosaic virus.</title>
        <authorList>
            <person name="Reed S.E."/>
            <person name="Tsai C.W."/>
            <person name="Willie K.J."/>
            <person name="Redinbaugh M.G."/>
            <person name="Hogenhout S.A."/>
        </authorList>
    </citation>
    <scope>NUCLEOTIDE SEQUENCE [GENOMIC RNA]</scope>
</reference>
<organism>
    <name type="scientific">Maize mosaic virus (isolate Maize/United States/Reed/2005)</name>
    <name type="common">MMV</name>
    <dbReference type="NCBI Taxonomy" id="928305"/>
    <lineage>
        <taxon>Viruses</taxon>
        <taxon>Riboviria</taxon>
        <taxon>Orthornavirae</taxon>
        <taxon>Negarnaviricota</taxon>
        <taxon>Haploviricotina</taxon>
        <taxon>Monjiviricetes</taxon>
        <taxon>Mononegavirales</taxon>
        <taxon>Rhabdoviridae</taxon>
        <taxon>Betarhabdovirinae</taxon>
        <taxon>Alphanucleorhabdovirus</taxon>
        <taxon>Alphanucleorhabdovirus maydis</taxon>
    </lineage>
</organism>
<keyword id="KW-0167">Capsid protein</keyword>
<keyword id="KW-1139">Helical capsid protein</keyword>
<keyword id="KW-1035">Host cytoplasm</keyword>
<keyword id="KW-1185">Reference proteome</keyword>
<keyword id="KW-0687">Ribonucleoprotein</keyword>
<keyword id="KW-0694">RNA-binding</keyword>
<keyword id="KW-0766">Superantigen</keyword>
<keyword id="KW-0543">Viral nucleoprotein</keyword>
<keyword id="KW-0946">Virion</keyword>
<evidence type="ECO:0000250" key="1"/>
<evidence type="ECO:0000256" key="2">
    <source>
        <dbReference type="SAM" id="MobiDB-lite"/>
    </source>
</evidence>
<evidence type="ECO:0000305" key="3"/>
<name>NCAP_MMVR</name>
<feature type="chain" id="PRO_0000299201" description="Nucleoprotein">
    <location>
        <begin position="1"/>
        <end position="447"/>
    </location>
</feature>
<feature type="region of interest" description="Disordered" evidence="2">
    <location>
        <begin position="401"/>
        <end position="447"/>
    </location>
</feature>
<comment type="function">
    <text evidence="1">Encapsidates the genome, protecting it from nucleases. If expressed without protein P it binds non-specifically RNA and therefore can bind it's own mRNA. Interaction with protein P abolishes any non-specific RNA binding, and prevents phosphorylation. The soluble N-P complex encapsidates specifically the genomic RNA, with protein N protecting the genome like a pearl necklace. The encapsidated genomic RNA is termed the nucleocapsid (NC) and serves as template for viral transcription and replication. Protein N binds protein P in the NC through a different interaction, and can be phosphorylated. Subsequent viral replication is dependent on intracellular concentration of newly synthesized protein N. During replication, encapsidation by protein N is coupled to RNA synthesis and all replicative products are resistant to nucleases (By similarity).</text>
</comment>
<comment type="subunit">
    <text evidence="1">Homomultimerizes to form the nucleocapsid. Binds to viral genomic RNA (By similarity).</text>
</comment>
<comment type="subcellular location">
    <subcellularLocation>
        <location>Virion</location>
    </subcellularLocation>
    <subcellularLocation>
        <location evidence="1">Host cytoplasm</location>
    </subcellularLocation>
</comment>
<comment type="similarity">
    <text evidence="3">Belongs to the nucleorhabdovirus nucleocapsid protein family.</text>
</comment>
<dbReference type="EMBL" id="AY618418">
    <property type="protein sequence ID" value="AAT66752.1"/>
    <property type="molecule type" value="Genomic_RNA"/>
</dbReference>
<dbReference type="RefSeq" id="YP_052850.1">
    <property type="nucleotide sequence ID" value="NC_005975.1"/>
</dbReference>
<dbReference type="GeneID" id="2886118"/>
<dbReference type="KEGG" id="vg:2886118"/>
<dbReference type="Proteomes" id="UP000008593">
    <property type="component" value="Segment"/>
</dbReference>
<dbReference type="GO" id="GO:0019029">
    <property type="term" value="C:helical viral capsid"/>
    <property type="evidence" value="ECO:0007669"/>
    <property type="project" value="UniProtKB-KW"/>
</dbReference>
<dbReference type="GO" id="GO:0030430">
    <property type="term" value="C:host cell cytoplasm"/>
    <property type="evidence" value="ECO:0007669"/>
    <property type="project" value="UniProtKB-SubCell"/>
</dbReference>
<dbReference type="GO" id="GO:1990904">
    <property type="term" value="C:ribonucleoprotein complex"/>
    <property type="evidence" value="ECO:0007669"/>
    <property type="project" value="UniProtKB-KW"/>
</dbReference>
<dbReference type="GO" id="GO:0019013">
    <property type="term" value="C:viral nucleocapsid"/>
    <property type="evidence" value="ECO:0007669"/>
    <property type="project" value="UniProtKB-KW"/>
</dbReference>
<dbReference type="GO" id="GO:0003723">
    <property type="term" value="F:RNA binding"/>
    <property type="evidence" value="ECO:0007669"/>
    <property type="project" value="UniProtKB-KW"/>
</dbReference>
<dbReference type="InterPro" id="IPR004902">
    <property type="entry name" value="Rhabdo_ncap_2"/>
</dbReference>
<dbReference type="Pfam" id="PF03216">
    <property type="entry name" value="Rhabdo_ncap_2"/>
    <property type="match status" value="1"/>
</dbReference>
<proteinExistence type="inferred from homology"/>
<accession>Q6E0X1</accession>
<gene>
    <name type="primary">N</name>
</gene>